<sequence length="446" mass="50434">MENISDLWNSALKELEKKVSKPSYETWLKSTTAHNLKKDVLTITAPNEFARDWLESHYSELISETLYDLTGAKLAIRFIIPQSQAEEDIDLPPVKPNPAQDDSAHLPQSMLNPKYTFDTFVIGSGNRFAHAASLAVAEAPAKAYNPLFIYGGVGLGKTHLMHAIGHYVIEHNPNAKVVYLSSEKFTNEFINSIRDNKAVDFRNKYRNVDVLLIDDIQFLAGKEQTQEEFFHTFNALHEESKQIVISSDRPPKEIPTLEDRLRSRFEWGLITDITPPDLETRIAILRKKAKAEGLDIPNEVMLYIANQIDSNIRELEGALIRVVAYSSLINKDINADLAAEALKDIIPNSKPKIISIYDIQKAVGDVYQVKLEDFKAKKRTKSVAFPRQIAMYLSRELTDSSLPKIGEEFGGRDHTTVIHAHEKISKLLKTDTQLQKQVEEINGILK</sequence>
<comment type="function">
    <text evidence="1">Plays an essential role in the initiation and regulation of chromosomal replication. ATP-DnaA binds to the origin of replication (oriC) to initiate formation of the DNA replication initiation complex once per cell cycle. Binds the DnaA box (a 9 base pair repeat at the origin) and separates the double-stranded (ds)DNA. Forms a right-handed helical filament on oriC DNA; dsDNA binds to the exterior of the filament while single-stranded (ss)DNA is stabiized in the filament's interior. The ATP-DnaA-oriC complex binds and stabilizes one strand of the AT-rich DNA unwinding element (DUE), permitting loading of DNA polymerase. After initiation quickly degrades to an ADP-DnaA complex that is not apt for DNA replication. Binds acidic phospholipids.</text>
</comment>
<comment type="subunit">
    <text evidence="1">Oligomerizes as a right-handed, spiral filament on DNA at oriC.</text>
</comment>
<comment type="subcellular location">
    <subcellularLocation>
        <location evidence="1">Cytoplasm</location>
    </subcellularLocation>
</comment>
<comment type="domain">
    <text evidence="1">Domain I is involved in oligomerization and binding regulators, domain II is flexibile and of varying length in different bacteria, domain III forms the AAA+ region, while domain IV binds dsDNA.</text>
</comment>
<comment type="similarity">
    <text evidence="1">Belongs to the DnaA family.</text>
</comment>
<dbReference type="EMBL" id="CP001176">
    <property type="protein sequence ID" value="ACK63276.1"/>
    <property type="molecule type" value="Genomic_DNA"/>
</dbReference>
<dbReference type="RefSeq" id="WP_000428017.1">
    <property type="nucleotide sequence ID" value="NZ_VEHB01000004.1"/>
</dbReference>
<dbReference type="SMR" id="B7HIH4"/>
<dbReference type="KEGG" id="bcb:BCB4264_A0001"/>
<dbReference type="HOGENOM" id="CLU_026910_3_1_9"/>
<dbReference type="Proteomes" id="UP000007096">
    <property type="component" value="Chromosome"/>
</dbReference>
<dbReference type="GO" id="GO:0005737">
    <property type="term" value="C:cytoplasm"/>
    <property type="evidence" value="ECO:0007669"/>
    <property type="project" value="UniProtKB-SubCell"/>
</dbReference>
<dbReference type="GO" id="GO:0005886">
    <property type="term" value="C:plasma membrane"/>
    <property type="evidence" value="ECO:0007669"/>
    <property type="project" value="TreeGrafter"/>
</dbReference>
<dbReference type="GO" id="GO:0005524">
    <property type="term" value="F:ATP binding"/>
    <property type="evidence" value="ECO:0007669"/>
    <property type="project" value="UniProtKB-UniRule"/>
</dbReference>
<dbReference type="GO" id="GO:0016887">
    <property type="term" value="F:ATP hydrolysis activity"/>
    <property type="evidence" value="ECO:0007669"/>
    <property type="project" value="InterPro"/>
</dbReference>
<dbReference type="GO" id="GO:0003688">
    <property type="term" value="F:DNA replication origin binding"/>
    <property type="evidence" value="ECO:0007669"/>
    <property type="project" value="UniProtKB-UniRule"/>
</dbReference>
<dbReference type="GO" id="GO:0008289">
    <property type="term" value="F:lipid binding"/>
    <property type="evidence" value="ECO:0007669"/>
    <property type="project" value="UniProtKB-KW"/>
</dbReference>
<dbReference type="GO" id="GO:0006270">
    <property type="term" value="P:DNA replication initiation"/>
    <property type="evidence" value="ECO:0007669"/>
    <property type="project" value="UniProtKB-UniRule"/>
</dbReference>
<dbReference type="GO" id="GO:0006275">
    <property type="term" value="P:regulation of DNA replication"/>
    <property type="evidence" value="ECO:0007669"/>
    <property type="project" value="UniProtKB-UniRule"/>
</dbReference>
<dbReference type="CDD" id="cd00009">
    <property type="entry name" value="AAA"/>
    <property type="match status" value="1"/>
</dbReference>
<dbReference type="CDD" id="cd06571">
    <property type="entry name" value="Bac_DnaA_C"/>
    <property type="match status" value="1"/>
</dbReference>
<dbReference type="FunFam" id="1.10.1750.10:FF:000003">
    <property type="entry name" value="Chromosomal replication initiator protein DnaA"/>
    <property type="match status" value="1"/>
</dbReference>
<dbReference type="FunFam" id="1.10.8.60:FF:000003">
    <property type="entry name" value="Chromosomal replication initiator protein DnaA"/>
    <property type="match status" value="1"/>
</dbReference>
<dbReference type="FunFam" id="3.30.300.180:FF:000002">
    <property type="entry name" value="Chromosomal replication initiator protein DnaA"/>
    <property type="match status" value="1"/>
</dbReference>
<dbReference type="FunFam" id="3.40.50.300:FF:000150">
    <property type="entry name" value="Chromosomal replication initiator protein DnaA"/>
    <property type="match status" value="1"/>
</dbReference>
<dbReference type="Gene3D" id="1.10.1750.10">
    <property type="match status" value="1"/>
</dbReference>
<dbReference type="Gene3D" id="1.10.8.60">
    <property type="match status" value="1"/>
</dbReference>
<dbReference type="Gene3D" id="3.30.300.180">
    <property type="match status" value="1"/>
</dbReference>
<dbReference type="Gene3D" id="3.40.50.300">
    <property type="entry name" value="P-loop containing nucleotide triphosphate hydrolases"/>
    <property type="match status" value="1"/>
</dbReference>
<dbReference type="HAMAP" id="MF_00377">
    <property type="entry name" value="DnaA_bact"/>
    <property type="match status" value="1"/>
</dbReference>
<dbReference type="InterPro" id="IPR003593">
    <property type="entry name" value="AAA+_ATPase"/>
</dbReference>
<dbReference type="InterPro" id="IPR001957">
    <property type="entry name" value="Chromosome_initiator_DnaA"/>
</dbReference>
<dbReference type="InterPro" id="IPR020591">
    <property type="entry name" value="Chromosome_initiator_DnaA-like"/>
</dbReference>
<dbReference type="InterPro" id="IPR018312">
    <property type="entry name" value="Chromosome_initiator_DnaA_CS"/>
</dbReference>
<dbReference type="InterPro" id="IPR013159">
    <property type="entry name" value="DnaA_C"/>
</dbReference>
<dbReference type="InterPro" id="IPR013317">
    <property type="entry name" value="DnaA_dom"/>
</dbReference>
<dbReference type="InterPro" id="IPR024633">
    <property type="entry name" value="DnaA_N_dom"/>
</dbReference>
<dbReference type="InterPro" id="IPR038454">
    <property type="entry name" value="DnaA_N_sf"/>
</dbReference>
<dbReference type="InterPro" id="IPR027417">
    <property type="entry name" value="P-loop_NTPase"/>
</dbReference>
<dbReference type="InterPro" id="IPR010921">
    <property type="entry name" value="Trp_repressor/repl_initiator"/>
</dbReference>
<dbReference type="NCBIfam" id="TIGR00362">
    <property type="entry name" value="DnaA"/>
    <property type="match status" value="1"/>
</dbReference>
<dbReference type="NCBIfam" id="NF010686">
    <property type="entry name" value="PRK14086.1"/>
    <property type="match status" value="1"/>
</dbReference>
<dbReference type="PANTHER" id="PTHR30050">
    <property type="entry name" value="CHROMOSOMAL REPLICATION INITIATOR PROTEIN DNAA"/>
    <property type="match status" value="1"/>
</dbReference>
<dbReference type="PANTHER" id="PTHR30050:SF2">
    <property type="entry name" value="CHROMOSOMAL REPLICATION INITIATOR PROTEIN DNAA"/>
    <property type="match status" value="1"/>
</dbReference>
<dbReference type="Pfam" id="PF00308">
    <property type="entry name" value="Bac_DnaA"/>
    <property type="match status" value="1"/>
</dbReference>
<dbReference type="Pfam" id="PF08299">
    <property type="entry name" value="Bac_DnaA_C"/>
    <property type="match status" value="1"/>
</dbReference>
<dbReference type="Pfam" id="PF11638">
    <property type="entry name" value="DnaA_N"/>
    <property type="match status" value="1"/>
</dbReference>
<dbReference type="PRINTS" id="PR00051">
    <property type="entry name" value="DNAA"/>
</dbReference>
<dbReference type="SMART" id="SM00382">
    <property type="entry name" value="AAA"/>
    <property type="match status" value="1"/>
</dbReference>
<dbReference type="SMART" id="SM00760">
    <property type="entry name" value="Bac_DnaA_C"/>
    <property type="match status" value="1"/>
</dbReference>
<dbReference type="SUPFAM" id="SSF52540">
    <property type="entry name" value="P-loop containing nucleoside triphosphate hydrolases"/>
    <property type="match status" value="1"/>
</dbReference>
<dbReference type="SUPFAM" id="SSF48295">
    <property type="entry name" value="TrpR-like"/>
    <property type="match status" value="1"/>
</dbReference>
<dbReference type="PROSITE" id="PS01008">
    <property type="entry name" value="DNAA"/>
    <property type="match status" value="1"/>
</dbReference>
<accession>B7HIH4</accession>
<name>DNAA_BACC4</name>
<gene>
    <name evidence="1" type="primary">dnaA</name>
    <name type="ordered locus">BCB4264_A0001</name>
</gene>
<feature type="chain" id="PRO_1000121946" description="Chromosomal replication initiator protein DnaA">
    <location>
        <begin position="1"/>
        <end position="446"/>
    </location>
</feature>
<feature type="region of interest" description="Domain I, interacts with DnaA modulators" evidence="1">
    <location>
        <begin position="1"/>
        <end position="81"/>
    </location>
</feature>
<feature type="region of interest" description="Domain II" evidence="1">
    <location>
        <begin position="81"/>
        <end position="109"/>
    </location>
</feature>
<feature type="region of interest" description="Domain III, AAA+ region" evidence="1">
    <location>
        <begin position="110"/>
        <end position="326"/>
    </location>
</feature>
<feature type="region of interest" description="Domain IV, binds dsDNA" evidence="1">
    <location>
        <begin position="327"/>
        <end position="446"/>
    </location>
</feature>
<feature type="binding site" evidence="1">
    <location>
        <position position="154"/>
    </location>
    <ligand>
        <name>ATP</name>
        <dbReference type="ChEBI" id="CHEBI:30616"/>
    </ligand>
</feature>
<feature type="binding site" evidence="1">
    <location>
        <position position="156"/>
    </location>
    <ligand>
        <name>ATP</name>
        <dbReference type="ChEBI" id="CHEBI:30616"/>
    </ligand>
</feature>
<feature type="binding site" evidence="1">
    <location>
        <position position="157"/>
    </location>
    <ligand>
        <name>ATP</name>
        <dbReference type="ChEBI" id="CHEBI:30616"/>
    </ligand>
</feature>
<feature type="binding site" evidence="1">
    <location>
        <position position="158"/>
    </location>
    <ligand>
        <name>ATP</name>
        <dbReference type="ChEBI" id="CHEBI:30616"/>
    </ligand>
</feature>
<evidence type="ECO:0000255" key="1">
    <source>
        <dbReference type="HAMAP-Rule" id="MF_00377"/>
    </source>
</evidence>
<keyword id="KW-0067">ATP-binding</keyword>
<keyword id="KW-0963">Cytoplasm</keyword>
<keyword id="KW-0235">DNA replication</keyword>
<keyword id="KW-0238">DNA-binding</keyword>
<keyword id="KW-0446">Lipid-binding</keyword>
<keyword id="KW-0547">Nucleotide-binding</keyword>
<reference key="1">
    <citation type="submission" date="2008-10" db="EMBL/GenBank/DDBJ databases">
        <title>Genome sequence of Bacillus cereus B4264.</title>
        <authorList>
            <person name="Dodson R.J."/>
            <person name="Durkin A.S."/>
            <person name="Rosovitz M.J."/>
            <person name="Rasko D.A."/>
            <person name="Hoffmaster A."/>
            <person name="Ravel J."/>
            <person name="Sutton G."/>
        </authorList>
    </citation>
    <scope>NUCLEOTIDE SEQUENCE [LARGE SCALE GENOMIC DNA]</scope>
    <source>
        <strain>B4264</strain>
    </source>
</reference>
<organism>
    <name type="scientific">Bacillus cereus (strain B4264)</name>
    <dbReference type="NCBI Taxonomy" id="405532"/>
    <lineage>
        <taxon>Bacteria</taxon>
        <taxon>Bacillati</taxon>
        <taxon>Bacillota</taxon>
        <taxon>Bacilli</taxon>
        <taxon>Bacillales</taxon>
        <taxon>Bacillaceae</taxon>
        <taxon>Bacillus</taxon>
        <taxon>Bacillus cereus group</taxon>
    </lineage>
</organism>
<protein>
    <recommendedName>
        <fullName evidence="1">Chromosomal replication initiator protein DnaA</fullName>
    </recommendedName>
</protein>
<proteinExistence type="inferred from homology"/>